<sequence length="106" mass="12532">MPFLDIQKRFGLNIDRWLTIQSAEQPYKMAGRCHAFEKEWIECAHGIGYTRAEKECKIEYDDFVECLLRQKTMRRAGTIRKQRDKLIKEGKYTPPPHHIGKGEPRP</sequence>
<proteinExistence type="inferred from homology"/>
<feature type="chain" id="PRO_0000251864" description="NADH dehydrogenase [ubiquinone] iron-sulfur protein 5">
    <location>
        <begin position="1"/>
        <end position="106"/>
    </location>
</feature>
<feature type="domain" description="CHCH" evidence="2">
    <location>
        <begin position="30"/>
        <end position="74"/>
    </location>
</feature>
<feature type="region of interest" description="Disordered" evidence="3">
    <location>
        <begin position="84"/>
        <end position="106"/>
    </location>
</feature>
<feature type="short sequence motif" description="Cx9C motif 1" evidence="2">
    <location>
        <begin position="33"/>
        <end position="43"/>
    </location>
</feature>
<feature type="short sequence motif" description="Cx9C motif 2" evidence="2">
    <location>
        <begin position="56"/>
        <end position="66"/>
    </location>
</feature>
<feature type="disulfide bond" evidence="2">
    <location>
        <begin position="33"/>
        <end position="66"/>
    </location>
</feature>
<feature type="disulfide bond" evidence="2">
    <location>
        <begin position="43"/>
        <end position="56"/>
    </location>
</feature>
<organism>
    <name type="scientific">Gorilla gorilla gorilla</name>
    <name type="common">Western lowland gorilla</name>
    <dbReference type="NCBI Taxonomy" id="9595"/>
    <lineage>
        <taxon>Eukaryota</taxon>
        <taxon>Metazoa</taxon>
        <taxon>Chordata</taxon>
        <taxon>Craniata</taxon>
        <taxon>Vertebrata</taxon>
        <taxon>Euteleostomi</taxon>
        <taxon>Mammalia</taxon>
        <taxon>Eutheria</taxon>
        <taxon>Euarchontoglires</taxon>
        <taxon>Primates</taxon>
        <taxon>Haplorrhini</taxon>
        <taxon>Catarrhini</taxon>
        <taxon>Hominidae</taxon>
        <taxon>Gorilla</taxon>
    </lineage>
</organism>
<protein>
    <recommendedName>
        <fullName>NADH dehydrogenase [ubiquinone] iron-sulfur protein 5</fullName>
    </recommendedName>
    <alternativeName>
        <fullName>Complex I-15 kDa</fullName>
        <shortName>CI-15 kDa</shortName>
    </alternativeName>
    <alternativeName>
        <fullName>NADH-ubiquinone oxidoreductase 15 kDa subunit</fullName>
    </alternativeName>
</protein>
<accession>Q0MQH3</accession>
<dbReference type="EMBL" id="DQ885661">
    <property type="protein sequence ID" value="ABH12170.1"/>
    <property type="molecule type" value="mRNA"/>
</dbReference>
<dbReference type="RefSeq" id="NP_001266485.1">
    <property type="nucleotide sequence ID" value="NM_001279556.1"/>
</dbReference>
<dbReference type="RefSeq" id="XP_030868484.1">
    <property type="nucleotide sequence ID" value="XM_031012624.2"/>
</dbReference>
<dbReference type="SMR" id="Q0MQH3"/>
<dbReference type="FunCoup" id="Q0MQH3">
    <property type="interactions" value="856"/>
</dbReference>
<dbReference type="GeneID" id="101141794"/>
<dbReference type="CTD" id="4725"/>
<dbReference type="eggNOG" id="KOG4110">
    <property type="taxonomic scope" value="Eukaryota"/>
</dbReference>
<dbReference type="HOGENOM" id="CLU_176387_0_0_1"/>
<dbReference type="InParanoid" id="Q0MQH3"/>
<dbReference type="Proteomes" id="UP000001519">
    <property type="component" value="Unplaced"/>
</dbReference>
<dbReference type="GO" id="GO:0005743">
    <property type="term" value="C:mitochondrial inner membrane"/>
    <property type="evidence" value="ECO:0007669"/>
    <property type="project" value="UniProtKB-SubCell"/>
</dbReference>
<dbReference type="GO" id="GO:0005758">
    <property type="term" value="C:mitochondrial intermembrane space"/>
    <property type="evidence" value="ECO:0007669"/>
    <property type="project" value="UniProtKB-SubCell"/>
</dbReference>
<dbReference type="GO" id="GO:0005739">
    <property type="term" value="C:mitochondrion"/>
    <property type="evidence" value="ECO:0000250"/>
    <property type="project" value="UniProtKB"/>
</dbReference>
<dbReference type="GO" id="GO:0045271">
    <property type="term" value="C:respiratory chain complex I"/>
    <property type="evidence" value="ECO:0000250"/>
    <property type="project" value="UniProtKB"/>
</dbReference>
<dbReference type="GO" id="GO:0032981">
    <property type="term" value="P:mitochondrial respiratory chain complex I assembly"/>
    <property type="evidence" value="ECO:0000250"/>
    <property type="project" value="UniProtKB"/>
</dbReference>
<dbReference type="CDD" id="cd24141">
    <property type="entry name" value="NDUFS5-like"/>
    <property type="match status" value="1"/>
</dbReference>
<dbReference type="InterPro" id="IPR019342">
    <property type="entry name" value="NADH_UbQ_OxRdtase_FeS-su5"/>
</dbReference>
<dbReference type="PANTHER" id="PTHR15224">
    <property type="entry name" value="NADH DEHYDROGENASE [UBIQUINONE] IRON-SULFUR PROTEIN 5"/>
    <property type="match status" value="1"/>
</dbReference>
<dbReference type="PANTHER" id="PTHR15224:SF1">
    <property type="entry name" value="NADH DEHYDROGENASE [UBIQUINONE] IRON-SULFUR PROTEIN 5"/>
    <property type="match status" value="1"/>
</dbReference>
<dbReference type="Pfam" id="PF10200">
    <property type="entry name" value="Ndufs5"/>
    <property type="match status" value="1"/>
</dbReference>
<dbReference type="PROSITE" id="PS51808">
    <property type="entry name" value="CHCH"/>
    <property type="match status" value="1"/>
</dbReference>
<gene>
    <name type="primary">NDUFS5</name>
</gene>
<keyword id="KW-1015">Disulfide bond</keyword>
<keyword id="KW-0249">Electron transport</keyword>
<keyword id="KW-0472">Membrane</keyword>
<keyword id="KW-0496">Mitochondrion</keyword>
<keyword id="KW-0999">Mitochondrion inner membrane</keyword>
<keyword id="KW-1185">Reference proteome</keyword>
<keyword id="KW-0679">Respiratory chain</keyword>
<keyword id="KW-0813">Transport</keyword>
<evidence type="ECO:0000250" key="1">
    <source>
        <dbReference type="UniProtKB" id="O43920"/>
    </source>
</evidence>
<evidence type="ECO:0000255" key="2">
    <source>
        <dbReference type="PROSITE-ProRule" id="PRU01150"/>
    </source>
</evidence>
<evidence type="ECO:0000256" key="3">
    <source>
        <dbReference type="SAM" id="MobiDB-lite"/>
    </source>
</evidence>
<evidence type="ECO:0000305" key="4"/>
<comment type="function">
    <text evidence="1">Accessory subunit of the mitochondrial membrane respiratory chain NADH dehydrogenase (Complex I), that is believed not to be involved in catalysis. Complex I functions in the transfer of electrons from NADH to the respiratory chain. The immediate electron acceptor for the enzyme is believed to be ubiquinone.</text>
</comment>
<comment type="subunit">
    <text evidence="1">Mammalian complex I is composed of 45 different subunits. This is a component of the iron-sulfur (IP) fragment of the enzyme.</text>
</comment>
<comment type="subcellular location">
    <subcellularLocation>
        <location evidence="1">Mitochondrion inner membrane</location>
        <topology evidence="1">Peripheral membrane protein</topology>
    </subcellularLocation>
    <subcellularLocation>
        <location evidence="1">Mitochondrion intermembrane space</location>
    </subcellularLocation>
</comment>
<comment type="domain">
    <text evidence="1">Contains two C-X9-C motifs that are predicted to form a helix-coil-helix structure, permitting the formation of intramolecular disulfide bonds.</text>
</comment>
<comment type="similarity">
    <text evidence="4">Belongs to the complex I NDUFS5 subunit family.</text>
</comment>
<reference key="1">
    <citation type="journal article" date="2006" name="Gene">
        <title>Adaptive selection of mitochondrial complex I subunits during primate radiation.</title>
        <authorList>
            <person name="Mishmar D."/>
            <person name="Ruiz-Pesini E."/>
            <person name="Mondragon-Palomino M."/>
            <person name="Procaccio V."/>
            <person name="Gaut B."/>
            <person name="Wallace D.C."/>
        </authorList>
    </citation>
    <scope>NUCLEOTIDE SEQUENCE [MRNA]</scope>
</reference>
<name>NDUS5_GORGO</name>